<comment type="function">
    <text evidence="2">Forms a water-specific channel that provides the plasma membranes of renal collecting duct with high permeability to water, thereby permitting water to move in the direction of an osmotic gradient. Plays an essential role in renal water homeostasis. Could also be permeable to glycerol.</text>
</comment>
<comment type="catalytic activity">
    <reaction evidence="2">
        <text>H2O(in) = H2O(out)</text>
        <dbReference type="Rhea" id="RHEA:29667"/>
        <dbReference type="ChEBI" id="CHEBI:15377"/>
    </reaction>
</comment>
<comment type="catalytic activity">
    <reaction evidence="2">
        <text>glycerol(in) = glycerol(out)</text>
        <dbReference type="Rhea" id="RHEA:29675"/>
        <dbReference type="ChEBI" id="CHEBI:17754"/>
    </reaction>
</comment>
<comment type="subunit">
    <text evidence="2">Homotetramer.</text>
</comment>
<comment type="subcellular location">
    <subcellularLocation>
        <location evidence="2">Apical cell membrane</location>
        <topology evidence="2">Multi-pass membrane protein</topology>
    </subcellularLocation>
    <subcellularLocation>
        <location evidence="1">Basolateral cell membrane</location>
        <topology evidence="2">Multi-pass membrane protein</topology>
    </subcellularLocation>
    <subcellularLocation>
        <location evidence="2">Cell membrane</location>
        <topology evidence="2">Multi-pass membrane protein</topology>
    </subcellularLocation>
    <subcellularLocation>
        <location evidence="2">Cytoplasmic vesicle membrane</location>
        <topology evidence="2">Multi-pass membrane protein</topology>
    </subcellularLocation>
    <subcellularLocation>
        <location evidence="2">Golgi apparatus</location>
        <location evidence="2">trans-Golgi network membrane</location>
        <topology evidence="2">Multi-pass membrane protein</topology>
    </subcellularLocation>
    <text evidence="2">Shuttles from vesicles to the apical membrane. Vasopressin-regulated phosphorylation is required for translocation to the apical cell membrane. PLEKHA8/FAPP2 is required to transport AQP2 from the TGN to sites where AQP2 is phosphorylated.</text>
</comment>
<comment type="domain">
    <text evidence="2">Aquaporins contain two tandem repeats each containing three membrane-spanning domains and a pore-forming loop with the signature motif Asn-Pro-Ala (NPA).</text>
</comment>
<comment type="PTM">
    <text evidence="2">Serine phosphorylation is necessary and sufficient for expression at the apical membrane. Endocytosis is not phosphorylation-dependent.</text>
</comment>
<comment type="PTM">
    <text evidence="2">N-glycosylated.</text>
</comment>
<comment type="similarity">
    <text evidence="3">Belongs to the MIP/aquaporin (TC 1.A.8) family.</text>
</comment>
<proteinExistence type="inferred from homology"/>
<keyword id="KW-1003">Cell membrane</keyword>
<keyword id="KW-0968">Cytoplasmic vesicle</keyword>
<keyword id="KW-0325">Glycoprotein</keyword>
<keyword id="KW-0333">Golgi apparatus</keyword>
<keyword id="KW-0472">Membrane</keyword>
<keyword id="KW-0597">Phosphoprotein</keyword>
<keyword id="KW-0812">Transmembrane</keyword>
<keyword id="KW-1133">Transmembrane helix</keyword>
<keyword id="KW-0813">Transport</keyword>
<name>AQP2_TALEU</name>
<protein>
    <recommendedName>
        <fullName evidence="3">Aquaporin-2</fullName>
        <shortName>AQP-2</shortName>
    </recommendedName>
    <alternativeName>
        <fullName>ADH water channel</fullName>
    </alternativeName>
    <alternativeName>
        <fullName>Aquaporin-CD</fullName>
        <shortName>AQP-CD</shortName>
    </alternativeName>
    <alternativeName>
        <fullName>Collecting duct water channel protein</fullName>
    </alternativeName>
    <alternativeName>
        <fullName>WCH-CD</fullName>
    </alternativeName>
    <alternativeName>
        <fullName>Water channel protein for renal collecting duct</fullName>
    </alternativeName>
</protein>
<organism>
    <name type="scientific">Talpa europaea</name>
    <name type="common">European mole</name>
    <dbReference type="NCBI Taxonomy" id="9375"/>
    <lineage>
        <taxon>Eukaryota</taxon>
        <taxon>Metazoa</taxon>
        <taxon>Chordata</taxon>
        <taxon>Craniata</taxon>
        <taxon>Vertebrata</taxon>
        <taxon>Euteleostomi</taxon>
        <taxon>Mammalia</taxon>
        <taxon>Eutheria</taxon>
        <taxon>Laurasiatheria</taxon>
        <taxon>Eulipotyphla</taxon>
        <taxon>Talpidae</taxon>
        <taxon>Talpa</taxon>
    </lineage>
</organism>
<sequence length="109" mass="11239">SIAFSRAVFAEFLATLIFVFFGLGSALNWQQSLPSVLQIAMAFGLAIGTLVQALGHISGAHINPAVTVACLVGCHVSFLRAAFYVAAQLLGAVAGAALLHEVTPSDVRG</sequence>
<dbReference type="EMBL" id="Y15951">
    <property type="protein sequence ID" value="CAA75904.1"/>
    <property type="molecule type" value="Genomic_DNA"/>
</dbReference>
<dbReference type="SMR" id="O77740"/>
<dbReference type="GO" id="GO:0016324">
    <property type="term" value="C:apical plasma membrane"/>
    <property type="evidence" value="ECO:0000250"/>
    <property type="project" value="UniProtKB"/>
</dbReference>
<dbReference type="GO" id="GO:0016323">
    <property type="term" value="C:basolateral plasma membrane"/>
    <property type="evidence" value="ECO:0007669"/>
    <property type="project" value="UniProtKB-SubCell"/>
</dbReference>
<dbReference type="GO" id="GO:0030659">
    <property type="term" value="C:cytoplasmic vesicle membrane"/>
    <property type="evidence" value="ECO:0007669"/>
    <property type="project" value="UniProtKB-SubCell"/>
</dbReference>
<dbReference type="GO" id="GO:0005794">
    <property type="term" value="C:Golgi apparatus"/>
    <property type="evidence" value="ECO:0007669"/>
    <property type="project" value="UniProtKB-SubCell"/>
</dbReference>
<dbReference type="GO" id="GO:0005886">
    <property type="term" value="C:plasma membrane"/>
    <property type="evidence" value="ECO:0000250"/>
    <property type="project" value="UniProtKB"/>
</dbReference>
<dbReference type="GO" id="GO:0015250">
    <property type="term" value="F:water channel activity"/>
    <property type="evidence" value="ECO:0000250"/>
    <property type="project" value="UniProtKB"/>
</dbReference>
<dbReference type="GO" id="GO:0051289">
    <property type="term" value="P:protein homotetramerization"/>
    <property type="evidence" value="ECO:0000250"/>
    <property type="project" value="UniProtKB"/>
</dbReference>
<dbReference type="GO" id="GO:0006833">
    <property type="term" value="P:water transport"/>
    <property type="evidence" value="ECO:0000250"/>
    <property type="project" value="UniProtKB"/>
</dbReference>
<dbReference type="FunFam" id="1.20.1080.10:FF:000032">
    <property type="entry name" value="Aquaporin-2"/>
    <property type="match status" value="1"/>
</dbReference>
<dbReference type="Gene3D" id="1.20.1080.10">
    <property type="entry name" value="Glycerol uptake facilitator protein"/>
    <property type="match status" value="1"/>
</dbReference>
<dbReference type="InterPro" id="IPR023271">
    <property type="entry name" value="Aquaporin-like"/>
</dbReference>
<dbReference type="InterPro" id="IPR034294">
    <property type="entry name" value="Aquaporin_transptr"/>
</dbReference>
<dbReference type="InterPro" id="IPR000425">
    <property type="entry name" value="MIP"/>
</dbReference>
<dbReference type="InterPro" id="IPR022357">
    <property type="entry name" value="MIP_CS"/>
</dbReference>
<dbReference type="PANTHER" id="PTHR19139">
    <property type="entry name" value="AQUAPORIN TRANSPORTER"/>
    <property type="match status" value="1"/>
</dbReference>
<dbReference type="PANTHER" id="PTHR19139:SF45">
    <property type="entry name" value="AQUAPORIN-2"/>
    <property type="match status" value="1"/>
</dbReference>
<dbReference type="Pfam" id="PF00230">
    <property type="entry name" value="MIP"/>
    <property type="match status" value="1"/>
</dbReference>
<dbReference type="PRINTS" id="PR00783">
    <property type="entry name" value="MINTRINSICP"/>
</dbReference>
<dbReference type="SUPFAM" id="SSF81338">
    <property type="entry name" value="Aquaporin-like"/>
    <property type="match status" value="1"/>
</dbReference>
<dbReference type="PROSITE" id="PS00221">
    <property type="entry name" value="MIP"/>
    <property type="match status" value="1"/>
</dbReference>
<evidence type="ECO:0000250" key="1">
    <source>
        <dbReference type="UniProtKB" id="P34080"/>
    </source>
</evidence>
<evidence type="ECO:0000250" key="2">
    <source>
        <dbReference type="UniProtKB" id="P41181"/>
    </source>
</evidence>
<evidence type="ECO:0000305" key="3"/>
<accession>O77740</accession>
<reference key="1">
    <citation type="journal article" date="1998" name="Mol. Phylogenet. Evol.">
        <title>Highly congruent molecular support for a diverse superordinal clade of endemic African mammals.</title>
        <authorList>
            <person name="Stanhope M.J."/>
            <person name="Madsen O.J."/>
            <person name="Waddell V.G."/>
            <person name="Cleven G.C."/>
            <person name="de Jong W.W."/>
            <person name="Springer M.S."/>
        </authorList>
    </citation>
    <scope>NUCLEOTIDE SEQUENCE [GENOMIC DNA]</scope>
</reference>
<gene>
    <name evidence="2" type="primary">AQP2</name>
</gene>
<feature type="chain" id="PRO_0000063942" description="Aquaporin-2">
    <location>
        <begin position="1" status="less than"/>
        <end position="109" status="greater than"/>
    </location>
</feature>
<feature type="topological domain" description="Cytoplasmic" evidence="3">
    <location>
        <begin position="1" status="less than"/>
        <end position="6"/>
    </location>
</feature>
<feature type="transmembrane region" description="Helical" evidence="2">
    <location>
        <begin position="7"/>
        <end position="27"/>
    </location>
</feature>
<feature type="topological domain" description="Extracellular" evidence="3">
    <location>
        <begin position="28"/>
        <end position="35"/>
    </location>
</feature>
<feature type="transmembrane region" description="Helical" evidence="2">
    <location>
        <begin position="36"/>
        <end position="54"/>
    </location>
</feature>
<feature type="topological domain" description="Cytoplasmic" evidence="3">
    <location>
        <begin position="55"/>
        <end position="59"/>
    </location>
</feature>
<feature type="intramembrane region" description="Discontinuously helical" evidence="2">
    <location>
        <begin position="60"/>
        <end position="69"/>
    </location>
</feature>
<feature type="topological domain" description="Cytoplasmic" evidence="3">
    <location>
        <begin position="70"/>
        <end position="80"/>
    </location>
</feature>
<feature type="transmembrane region" description="Helical" evidence="2">
    <location>
        <begin position="81"/>
        <end position="102"/>
    </location>
</feature>
<feature type="topological domain" description="Extracellular" evidence="3">
    <location>
        <begin position="103"/>
        <end position="109" status="greater than"/>
    </location>
</feature>
<feature type="short sequence motif" description="NPA 1" evidence="2">
    <location>
        <begin position="63"/>
        <end position="65"/>
    </location>
</feature>
<feature type="non-terminal residue">
    <location>
        <position position="1"/>
    </location>
</feature>
<feature type="non-terminal residue">
    <location>
        <position position="109"/>
    </location>
</feature>